<reference key="1">
    <citation type="journal article" date="1997" name="J. Bacteriol.">
        <title>Nitrate assimilation gene cluster from the heterocyst-forming cyanobacterium Anabaena sp. strain PCC 7120.</title>
        <authorList>
            <person name="Frias J.E."/>
            <person name="Flores E."/>
            <person name="Herrero A."/>
        </authorList>
    </citation>
    <scope>NUCLEOTIDE SEQUENCE [GENOMIC DNA]</scope>
</reference>
<reference key="2">
    <citation type="submission" date="1999-06" db="EMBL/GenBank/DDBJ databases">
        <authorList>
            <person name="Frias J.E."/>
        </authorList>
    </citation>
    <scope>SEQUENCE REVISION</scope>
</reference>
<reference key="3">
    <citation type="journal article" date="2001" name="DNA Res.">
        <title>Complete genomic sequence of the filamentous nitrogen-fixing cyanobacterium Anabaena sp. strain PCC 7120.</title>
        <authorList>
            <person name="Kaneko T."/>
            <person name="Nakamura Y."/>
            <person name="Wolk C.P."/>
            <person name="Kuritz T."/>
            <person name="Sasamoto S."/>
            <person name="Watanabe A."/>
            <person name="Iriguchi M."/>
            <person name="Ishikawa A."/>
            <person name="Kawashima K."/>
            <person name="Kimura T."/>
            <person name="Kishida Y."/>
            <person name="Kohara M."/>
            <person name="Matsumoto M."/>
            <person name="Matsuno A."/>
            <person name="Muraki A."/>
            <person name="Nakazaki N."/>
            <person name="Shimpo S."/>
            <person name="Sugimoto M."/>
            <person name="Takazawa M."/>
            <person name="Yamada M."/>
            <person name="Yasuda M."/>
            <person name="Tabata S."/>
        </authorList>
    </citation>
    <scope>NUCLEOTIDE SEQUENCE [LARGE SCALE GENOMIC DNA]</scope>
    <source>
        <strain>PCC 7120 / SAG 25.82 / UTEX 2576</strain>
    </source>
</reference>
<reference key="4">
    <citation type="journal article" date="1997" name="J. Bacteriol.">
        <title>Nitrogen deprivation of Anabaena sp. strain PCC 7120 elicits rapid activation of a gene cluster that is essential for uptake and utilization of nitrate.</title>
        <authorList>
            <person name="Cai Y."/>
            <person name="Wolk C.P."/>
        </authorList>
    </citation>
    <scope>NUCLEOTIDE SEQUENCE [GENOMIC DNA] OF 1-92</scope>
</reference>
<protein>
    <recommendedName>
        <fullName evidence="5">Nitrate/nitrite binding protein NrtA</fullName>
    </recommendedName>
</protein>
<proteinExistence type="inferred from homology"/>
<organism>
    <name type="scientific">Nostoc sp. (strain PCC 7120 / SAG 25.82 / UTEX 2576)</name>
    <dbReference type="NCBI Taxonomy" id="103690"/>
    <lineage>
        <taxon>Bacteria</taxon>
        <taxon>Bacillati</taxon>
        <taxon>Cyanobacteriota</taxon>
        <taxon>Cyanophyceae</taxon>
        <taxon>Nostocales</taxon>
        <taxon>Nostocaceae</taxon>
        <taxon>Nostoc</taxon>
    </lineage>
</organism>
<gene>
    <name type="primary">nrtA</name>
    <name type="ordered locus">alr0608</name>
</gene>
<accession>Q44292</accession>
<accession>O06469</accession>
<comment type="function">
    <text evidence="1">Part of the ABC transporter complex NrtABCD involved in nitrate uptake. The complex is probably also involved in nitrite transport. NrtA is the substrate-binding protein.</text>
</comment>
<comment type="subunit">
    <text evidence="1">The complex is composed of two ATP-binding proteins (NrtC and NrtD), two transmembrane proteins (NrtB) and a solute-binding protein (NrtA).</text>
</comment>
<comment type="subcellular location">
    <subcellularLocation>
        <location evidence="1">Cell inner membrane</location>
        <topology evidence="1">Lipid-anchor</topology>
        <orientation evidence="1">Periplasmic side</orientation>
    </subcellularLocation>
</comment>
<comment type="similarity">
    <text evidence="5">Belongs to the CmpA/NrtA family.</text>
</comment>
<feature type="signal peptide" evidence="3">
    <location>
        <begin position="1"/>
        <end position="25"/>
    </location>
</feature>
<feature type="chain" id="PRO_0000057955" description="Nitrate/nitrite binding protein NrtA">
    <location>
        <begin position="26"/>
        <end position="440"/>
    </location>
</feature>
<feature type="region of interest" description="Disordered" evidence="4">
    <location>
        <begin position="30"/>
        <end position="51"/>
    </location>
</feature>
<feature type="compositionally biased region" description="Polar residues" evidence="4">
    <location>
        <begin position="30"/>
        <end position="39"/>
    </location>
</feature>
<feature type="compositionally biased region" description="Low complexity" evidence="4">
    <location>
        <begin position="40"/>
        <end position="51"/>
    </location>
</feature>
<feature type="binding site" evidence="2">
    <location>
        <position position="100"/>
    </location>
    <ligand>
        <name>nitrate</name>
        <dbReference type="ChEBI" id="CHEBI:17632"/>
    </ligand>
</feature>
<feature type="binding site" evidence="2">
    <location>
        <position position="148"/>
    </location>
    <ligand>
        <name>nitrate</name>
        <dbReference type="ChEBI" id="CHEBI:17632"/>
    </ligand>
</feature>
<feature type="binding site" evidence="2">
    <location>
        <position position="193"/>
    </location>
    <ligand>
        <name>nitrate</name>
        <dbReference type="ChEBI" id="CHEBI:17632"/>
    </ligand>
</feature>
<feature type="binding site" evidence="2">
    <location>
        <position position="237"/>
    </location>
    <ligand>
        <name>nitrate</name>
        <dbReference type="ChEBI" id="CHEBI:17632"/>
    </ligand>
</feature>
<feature type="binding site" evidence="2">
    <location>
        <position position="266"/>
    </location>
    <ligand>
        <name>nitrate</name>
        <dbReference type="ChEBI" id="CHEBI:17632"/>
    </ligand>
</feature>
<feature type="lipid moiety-binding region" description="N-palmitoyl cysteine" evidence="2">
    <location>
        <position position="26"/>
    </location>
</feature>
<feature type="lipid moiety-binding region" description="S-diacylglycerol cysteine" evidence="2">
    <location>
        <position position="26"/>
    </location>
</feature>
<feature type="sequence conflict" description="In Ref. 1; CAA68041." evidence="5" ref="1">
    <original>W</original>
    <variation>C</variation>
    <location>
        <position position="100"/>
    </location>
</feature>
<sequence>MTHVSRRKFLFTTGAAAAASILVHGCTSNGSQSATTGEQAPSAAPAANVSAANAPKVETTKAKLGFIPLTDAAPLIIAKEKGFFAKYGMTDIEVIKQKSWPVTRDNLKIGSSGGGIDGAHILSPMPYLMTINDKVPMYILARLNTNGQAISVAEKFKELNVNLESKSLKDAAIKAKADKKALKMGITFPGGTHDLWMRYWLAAGGINPDQDVVLEAVPPPQMVANMKVNTVDGFCVGEPWNAQLVNQKIGYSALVTGELWKDHPEKAFSMRQDWIEQNPNAAQAILMAILEAQQWCDKAENKEEMCKICSDRKYFNVAAADIIERAKGNIDYGDGRKEQNFAHRMKFWADNASYPYKSHDIWFLTEDIRWGYLPKDTKVQDIVNQVNKEDLWKKAAKAIGVADAEIPASSSRGVETFFDGVKFDPEKPEEYLNSLKIKKV</sequence>
<evidence type="ECO:0000250" key="1">
    <source>
        <dbReference type="UniProtKB" id="P38043"/>
    </source>
</evidence>
<evidence type="ECO:0000250" key="2">
    <source>
        <dbReference type="UniProtKB" id="P73452"/>
    </source>
</evidence>
<evidence type="ECO:0000255" key="3"/>
<evidence type="ECO:0000256" key="4">
    <source>
        <dbReference type="SAM" id="MobiDB-lite"/>
    </source>
</evidence>
<evidence type="ECO:0000305" key="5"/>
<keyword id="KW-0997">Cell inner membrane</keyword>
<keyword id="KW-1003">Cell membrane</keyword>
<keyword id="KW-0406">Ion transport</keyword>
<keyword id="KW-0449">Lipoprotein</keyword>
<keyword id="KW-0472">Membrane</keyword>
<keyword id="KW-0534">Nitrate assimilation</keyword>
<keyword id="KW-0564">Palmitate</keyword>
<keyword id="KW-1185">Reference proteome</keyword>
<keyword id="KW-0732">Signal</keyword>
<keyword id="KW-0813">Transport</keyword>
<name>NRTA_NOSS1</name>
<dbReference type="EMBL" id="X99709">
    <property type="protein sequence ID" value="CAA68041.2"/>
    <property type="molecule type" value="Genomic_DNA"/>
</dbReference>
<dbReference type="EMBL" id="BA000019">
    <property type="protein sequence ID" value="BAB72566.1"/>
    <property type="molecule type" value="Genomic_DNA"/>
</dbReference>
<dbReference type="EMBL" id="U61496">
    <property type="protein sequence ID" value="AAC46075.1"/>
    <property type="molecule type" value="Genomic_DNA"/>
</dbReference>
<dbReference type="PIR" id="AG1882">
    <property type="entry name" value="AG1882"/>
</dbReference>
<dbReference type="RefSeq" id="WP_010994784.1">
    <property type="nucleotide sequence ID" value="NZ_RSCN01000009.1"/>
</dbReference>
<dbReference type="SMR" id="Q44292"/>
<dbReference type="STRING" id="103690.gene:10492619"/>
<dbReference type="TCDB" id="3.A.1.16.4">
    <property type="family name" value="the atp-binding cassette (abc) superfamily"/>
</dbReference>
<dbReference type="KEGG" id="ana:alr0608"/>
<dbReference type="eggNOG" id="COG0715">
    <property type="taxonomic scope" value="Bacteria"/>
</dbReference>
<dbReference type="OrthoDB" id="416209at2"/>
<dbReference type="Proteomes" id="UP000002483">
    <property type="component" value="Chromosome"/>
</dbReference>
<dbReference type="GO" id="GO:0005886">
    <property type="term" value="C:plasma membrane"/>
    <property type="evidence" value="ECO:0007669"/>
    <property type="project" value="UniProtKB-SubCell"/>
</dbReference>
<dbReference type="GO" id="GO:0006811">
    <property type="term" value="P:monoatomic ion transport"/>
    <property type="evidence" value="ECO:0007669"/>
    <property type="project" value="UniProtKB-KW"/>
</dbReference>
<dbReference type="GO" id="GO:0042128">
    <property type="term" value="P:nitrate assimilation"/>
    <property type="evidence" value="ECO:0007669"/>
    <property type="project" value="UniProtKB-KW"/>
</dbReference>
<dbReference type="CDD" id="cd13553">
    <property type="entry name" value="PBP2_NrtA_CpmA_like"/>
    <property type="match status" value="1"/>
</dbReference>
<dbReference type="Gene3D" id="3.40.190.10">
    <property type="entry name" value="Periplasmic binding protein-like II"/>
    <property type="match status" value="2"/>
</dbReference>
<dbReference type="InterPro" id="IPR044527">
    <property type="entry name" value="NrtA/CpmA_ABC-bd_dom"/>
</dbReference>
<dbReference type="InterPro" id="IPR006311">
    <property type="entry name" value="TAT_signal"/>
</dbReference>
<dbReference type="PANTHER" id="PTHR30024">
    <property type="entry name" value="ALIPHATIC SULFONATES-BINDING PROTEIN-RELATED"/>
    <property type="match status" value="1"/>
</dbReference>
<dbReference type="PANTHER" id="PTHR30024:SF7">
    <property type="entry name" value="NITRATE_NITRITE BINDING PROTEIN NRTA"/>
    <property type="match status" value="1"/>
</dbReference>
<dbReference type="Pfam" id="PF13379">
    <property type="entry name" value="NMT1_2"/>
    <property type="match status" value="1"/>
</dbReference>
<dbReference type="SUPFAM" id="SSF53850">
    <property type="entry name" value="Periplasmic binding protein-like II"/>
    <property type="match status" value="1"/>
</dbReference>